<gene>
    <name evidence="1" type="primary">pdaD</name>
    <name type="ordered locus">MmarC5_1827</name>
</gene>
<protein>
    <recommendedName>
        <fullName evidence="1">Pyruvoyl-dependent arginine decarboxylase</fullName>
        <shortName evidence="1">PvlArgDC</shortName>
        <ecNumber evidence="1">4.1.1.19</ecNumber>
    </recommendedName>
    <component>
        <recommendedName>
            <fullName evidence="1">Pyruvoyl-dependent arginine decarboxylase subunit beta</fullName>
        </recommendedName>
    </component>
    <component>
        <recommendedName>
            <fullName evidence="1">Pyruvoyl-dependent arginine decarboxylase subunit alpha</fullName>
        </recommendedName>
    </component>
</protein>
<name>PDAD_METM5</name>
<accession>A4G0Z0</accession>
<feature type="chain" id="PRO_1000068395" description="Pyruvoyl-dependent arginine decarboxylase subunit beta" evidence="1">
    <location>
        <begin position="1"/>
        <end position="51"/>
    </location>
</feature>
<feature type="chain" id="PRO_1000068396" description="Pyruvoyl-dependent arginine decarboxylase subunit alpha" evidence="1">
    <location>
        <begin position="52"/>
        <end position="164"/>
    </location>
</feature>
<feature type="site" description="Cleavage (non-hydrolytic)" evidence="1">
    <location>
        <begin position="51"/>
        <end position="52"/>
    </location>
</feature>
<feature type="modified residue" description="Pyruvic acid (Ser)" evidence="1">
    <location>
        <position position="52"/>
    </location>
</feature>
<keyword id="KW-0210">Decarboxylase</keyword>
<keyword id="KW-0456">Lyase</keyword>
<keyword id="KW-0670">Pyruvate</keyword>
<proteinExistence type="inferred from homology"/>
<evidence type="ECO:0000255" key="1">
    <source>
        <dbReference type="HAMAP-Rule" id="MF_01404"/>
    </source>
</evidence>
<reference key="1">
    <citation type="submission" date="2007-03" db="EMBL/GenBank/DDBJ databases">
        <title>Complete sequence of chromosome of Methanococcus maripaludis C5.</title>
        <authorList>
            <consortium name="US DOE Joint Genome Institute"/>
            <person name="Copeland A."/>
            <person name="Lucas S."/>
            <person name="Lapidus A."/>
            <person name="Barry K."/>
            <person name="Glavina del Rio T."/>
            <person name="Dalin E."/>
            <person name="Tice H."/>
            <person name="Pitluck S."/>
            <person name="Chertkov O."/>
            <person name="Brettin T."/>
            <person name="Bruce D."/>
            <person name="Han C."/>
            <person name="Detter J.C."/>
            <person name="Schmutz J."/>
            <person name="Larimer F."/>
            <person name="Land M."/>
            <person name="Hauser L."/>
            <person name="Kyrpides N."/>
            <person name="Mikhailova N."/>
            <person name="Sieprawska-Lupa M."/>
            <person name="Whitman W.B."/>
            <person name="Richardson P."/>
        </authorList>
    </citation>
    <scope>NUCLEOTIDE SEQUENCE [LARGE SCALE GENOMIC DNA]</scope>
    <source>
        <strain>C5 / ATCC BAA-1333</strain>
    </source>
</reference>
<organism>
    <name type="scientific">Methanococcus maripaludis (strain C5 / ATCC BAA-1333)</name>
    <dbReference type="NCBI Taxonomy" id="402880"/>
    <lineage>
        <taxon>Archaea</taxon>
        <taxon>Methanobacteriati</taxon>
        <taxon>Methanobacteriota</taxon>
        <taxon>Methanomada group</taxon>
        <taxon>Methanococci</taxon>
        <taxon>Methanococcales</taxon>
        <taxon>Methanococcaceae</taxon>
        <taxon>Methanococcus</taxon>
    </lineage>
</organism>
<comment type="catalytic activity">
    <reaction evidence="1">
        <text>L-arginine + H(+) = agmatine + CO2</text>
        <dbReference type="Rhea" id="RHEA:17641"/>
        <dbReference type="ChEBI" id="CHEBI:15378"/>
        <dbReference type="ChEBI" id="CHEBI:16526"/>
        <dbReference type="ChEBI" id="CHEBI:32682"/>
        <dbReference type="ChEBI" id="CHEBI:58145"/>
        <dbReference type="EC" id="4.1.1.19"/>
    </reaction>
</comment>
<comment type="cofactor">
    <cofactor evidence="1">
        <name>pyruvate</name>
        <dbReference type="ChEBI" id="CHEBI:15361"/>
    </cofactor>
    <text evidence="1">Binds 1 pyruvoyl group covalently per subunit.</text>
</comment>
<comment type="similarity">
    <text evidence="1">Belongs to the PdaD family.</text>
</comment>
<dbReference type="EC" id="4.1.1.19" evidence="1"/>
<dbReference type="EMBL" id="CP000609">
    <property type="protein sequence ID" value="ABO36124.1"/>
    <property type="molecule type" value="Genomic_DNA"/>
</dbReference>
<dbReference type="RefSeq" id="WP_011869569.1">
    <property type="nucleotide sequence ID" value="NC_009135.1"/>
</dbReference>
<dbReference type="SMR" id="A4G0Z0"/>
<dbReference type="STRING" id="402880.MmarC5_1827"/>
<dbReference type="GeneID" id="4927771"/>
<dbReference type="KEGG" id="mmq:MmarC5_1827"/>
<dbReference type="eggNOG" id="arCOG04490">
    <property type="taxonomic scope" value="Archaea"/>
</dbReference>
<dbReference type="HOGENOM" id="CLU_114389_2_0_2"/>
<dbReference type="OrthoDB" id="30748at2157"/>
<dbReference type="Proteomes" id="UP000000253">
    <property type="component" value="Chromosome"/>
</dbReference>
<dbReference type="GO" id="GO:0008792">
    <property type="term" value="F:arginine decarboxylase activity"/>
    <property type="evidence" value="ECO:0007669"/>
    <property type="project" value="UniProtKB-UniRule"/>
</dbReference>
<dbReference type="GO" id="GO:0006527">
    <property type="term" value="P:arginine catabolic process"/>
    <property type="evidence" value="ECO:0007669"/>
    <property type="project" value="InterPro"/>
</dbReference>
<dbReference type="Gene3D" id="3.30.60.30">
    <property type="match status" value="1"/>
</dbReference>
<dbReference type="Gene3D" id="3.50.20.10">
    <property type="entry name" value="Pyruvoyl-Dependent Histidine Decarboxylase, subunit B"/>
    <property type="match status" value="1"/>
</dbReference>
<dbReference type="HAMAP" id="MF_01404">
    <property type="entry name" value="PvlArgDC"/>
    <property type="match status" value="1"/>
</dbReference>
<dbReference type="InterPro" id="IPR016104">
    <property type="entry name" value="Pyr-dep_his/arg-deCO2ase"/>
</dbReference>
<dbReference type="InterPro" id="IPR016105">
    <property type="entry name" value="Pyr-dep_his/arg-deCO2ase_sand"/>
</dbReference>
<dbReference type="InterPro" id="IPR002724">
    <property type="entry name" value="Pyruvoyl-dep_arg_deCO2ase"/>
</dbReference>
<dbReference type="NCBIfam" id="TIGR00286">
    <property type="entry name" value="pyruvoyl-dependent arginine decarboxylase"/>
    <property type="match status" value="1"/>
</dbReference>
<dbReference type="PANTHER" id="PTHR40438">
    <property type="entry name" value="PYRUVOYL-DEPENDENT ARGININE DECARBOXYLASE"/>
    <property type="match status" value="1"/>
</dbReference>
<dbReference type="PANTHER" id="PTHR40438:SF1">
    <property type="entry name" value="PYRUVOYL-DEPENDENT ARGININE DECARBOXYLASE"/>
    <property type="match status" value="1"/>
</dbReference>
<dbReference type="Pfam" id="PF01862">
    <property type="entry name" value="PvlArgDC"/>
    <property type="match status" value="1"/>
</dbReference>
<dbReference type="PIRSF" id="PIRSF005216">
    <property type="entry name" value="Pyruvoyl-dep_arg_deCO2ase"/>
    <property type="match status" value="1"/>
</dbReference>
<dbReference type="SFLD" id="SFLDF00471">
    <property type="entry name" value="Pyruvoyl-dependent_arginine_de"/>
    <property type="match status" value="1"/>
</dbReference>
<dbReference type="SFLD" id="SFLDG01170">
    <property type="entry name" value="Pyruvoyl-dependent_arginine_de"/>
    <property type="match status" value="1"/>
</dbReference>
<dbReference type="SFLD" id="SFLDS00055">
    <property type="entry name" value="Pyruvoyl-Dependent_Histidine/A"/>
    <property type="match status" value="1"/>
</dbReference>
<dbReference type="SUPFAM" id="SSF56271">
    <property type="entry name" value="Pyruvoyl-dependent histidine and arginine decarboxylases"/>
    <property type="match status" value="1"/>
</dbReference>
<sequence length="164" mass="17618">MMKTSAIHSPFEAPNTISLVAGTGDSNNPLNAFDMSLLKSGIGNLNLIRISSIMPPKADIIPLPKIPQGSLVPTAYGYQISEIKGETVAAGISVAIPKDKELCGLIMEYECVGGKKECEDTVRNMAKEGFEMRGWEIDEIISIASEHTVENIGCAFAAAALWYK</sequence>